<feature type="chain" id="PRO_0000215547" description="UPF0253 protein VP2335">
    <location>
        <begin position="1"/>
        <end position="68"/>
    </location>
</feature>
<accession>Q87MC1</accession>
<proteinExistence type="inferred from homology"/>
<reference key="1">
    <citation type="journal article" date="2003" name="Lancet">
        <title>Genome sequence of Vibrio parahaemolyticus: a pathogenic mechanism distinct from that of V. cholerae.</title>
        <authorList>
            <person name="Makino K."/>
            <person name="Oshima K."/>
            <person name="Kurokawa K."/>
            <person name="Yokoyama K."/>
            <person name="Uda T."/>
            <person name="Tagomori K."/>
            <person name="Iijima Y."/>
            <person name="Najima M."/>
            <person name="Nakano M."/>
            <person name="Yamashita A."/>
            <person name="Kubota Y."/>
            <person name="Kimura S."/>
            <person name="Yasunaga T."/>
            <person name="Honda T."/>
            <person name="Shinagawa H."/>
            <person name="Hattori M."/>
            <person name="Iida T."/>
        </authorList>
    </citation>
    <scope>NUCLEOTIDE SEQUENCE [LARGE SCALE GENOMIC DNA]</scope>
    <source>
        <strain>RIMD 2210633</strain>
    </source>
</reference>
<evidence type="ECO:0000255" key="1">
    <source>
        <dbReference type="HAMAP-Rule" id="MF_01064"/>
    </source>
</evidence>
<name>Y2335_VIBPA</name>
<sequence>MQVYGCCELVRELYAQIGSGDQAYIPQAISCAVKALNDVAADESLPKEVREKAAFAAANLLISDFEDK</sequence>
<organism>
    <name type="scientific">Vibrio parahaemolyticus serotype O3:K6 (strain RIMD 2210633)</name>
    <dbReference type="NCBI Taxonomy" id="223926"/>
    <lineage>
        <taxon>Bacteria</taxon>
        <taxon>Pseudomonadati</taxon>
        <taxon>Pseudomonadota</taxon>
        <taxon>Gammaproteobacteria</taxon>
        <taxon>Vibrionales</taxon>
        <taxon>Vibrionaceae</taxon>
        <taxon>Vibrio</taxon>
    </lineage>
</organism>
<comment type="similarity">
    <text evidence="1">Belongs to the UPF0253 family.</text>
</comment>
<protein>
    <recommendedName>
        <fullName evidence="1">UPF0253 protein VP2335</fullName>
    </recommendedName>
</protein>
<gene>
    <name type="ordered locus">VP2335</name>
</gene>
<dbReference type="EMBL" id="BA000031">
    <property type="protein sequence ID" value="BAC60598.1"/>
    <property type="molecule type" value="Genomic_DNA"/>
</dbReference>
<dbReference type="RefSeq" id="NP_798714.1">
    <property type="nucleotide sequence ID" value="NC_004603.1"/>
</dbReference>
<dbReference type="RefSeq" id="WP_005391765.1">
    <property type="nucleotide sequence ID" value="NC_004603.1"/>
</dbReference>
<dbReference type="SMR" id="Q87MC1"/>
<dbReference type="KEGG" id="vpa:VP2335"/>
<dbReference type="PATRIC" id="fig|223926.6.peg.2238"/>
<dbReference type="eggNOG" id="ENOG5032Z3X">
    <property type="taxonomic scope" value="Bacteria"/>
</dbReference>
<dbReference type="HOGENOM" id="CLU_190008_0_0_6"/>
<dbReference type="Proteomes" id="UP000002493">
    <property type="component" value="Chromosome 1"/>
</dbReference>
<dbReference type="HAMAP" id="MF_01064">
    <property type="entry name" value="UPF0253"/>
    <property type="match status" value="1"/>
</dbReference>
<dbReference type="InterPro" id="IPR009624">
    <property type="entry name" value="UPF0253"/>
</dbReference>
<dbReference type="NCBIfam" id="NF003436">
    <property type="entry name" value="PRK04964.1"/>
    <property type="match status" value="1"/>
</dbReference>
<dbReference type="Pfam" id="PF06786">
    <property type="entry name" value="UPF0253"/>
    <property type="match status" value="1"/>
</dbReference>